<gene>
    <name type="primary">Aox2</name>
    <name type="synonym">Aoh3</name>
    <name type="synonym">Aox3l1</name>
</gene>
<evidence type="ECO:0000250" key="1">
    <source>
        <dbReference type="UniProtKB" id="O54754"/>
    </source>
</evidence>
<evidence type="ECO:0000250" key="2">
    <source>
        <dbReference type="UniProtKB" id="Q06278"/>
    </source>
</evidence>
<evidence type="ECO:0000255" key="3">
    <source>
        <dbReference type="PROSITE-ProRule" id="PRU00465"/>
    </source>
</evidence>
<evidence type="ECO:0000255" key="4">
    <source>
        <dbReference type="PROSITE-ProRule" id="PRU00718"/>
    </source>
</evidence>
<evidence type="ECO:0000269" key="5">
    <source>
    </source>
</evidence>
<evidence type="ECO:0000269" key="6">
    <source>
    </source>
</evidence>
<evidence type="ECO:0000305" key="7"/>
<evidence type="ECO:0000305" key="8">
    <source>
    </source>
</evidence>
<feature type="chain" id="PRO_0000425245" description="Aldehyde oxidase 2">
    <location>
        <begin position="1"/>
        <end position="1345"/>
    </location>
</feature>
<feature type="domain" description="2Fe-2S ferredoxin-type" evidence="3">
    <location>
        <begin position="9"/>
        <end position="96"/>
    </location>
</feature>
<feature type="domain" description="FAD-binding PCMH-type" evidence="4">
    <location>
        <begin position="238"/>
        <end position="423"/>
    </location>
</feature>
<feature type="active site" description="Proton acceptor; for azaheterocycle hydroxylase activity" evidence="1">
    <location>
        <position position="1276"/>
    </location>
</feature>
<feature type="binding site" evidence="2">
    <location>
        <position position="48"/>
    </location>
    <ligand>
        <name>[2Fe-2S] cluster</name>
        <dbReference type="ChEBI" id="CHEBI:190135"/>
        <label>1</label>
    </ligand>
</feature>
<feature type="binding site" evidence="2">
    <location>
        <position position="53"/>
    </location>
    <ligand>
        <name>[2Fe-2S] cluster</name>
        <dbReference type="ChEBI" id="CHEBI:190135"/>
        <label>1</label>
    </ligand>
</feature>
<feature type="binding site" evidence="2">
    <location>
        <position position="56"/>
    </location>
    <ligand>
        <name>[2Fe-2S] cluster</name>
        <dbReference type="ChEBI" id="CHEBI:190135"/>
        <label>1</label>
    </ligand>
</feature>
<feature type="binding site" evidence="2">
    <location>
        <position position="78"/>
    </location>
    <ligand>
        <name>[2Fe-2S] cluster</name>
        <dbReference type="ChEBI" id="CHEBI:190135"/>
        <label>1</label>
    </ligand>
</feature>
<feature type="binding site" evidence="2">
    <location>
        <position position="117"/>
    </location>
    <ligand>
        <name>Mo-molybdopterin</name>
        <dbReference type="ChEBI" id="CHEBI:71302"/>
    </ligand>
</feature>
<feature type="binding site" evidence="2">
    <location>
        <position position="118"/>
    </location>
    <ligand>
        <name>[2Fe-2S] cluster</name>
        <dbReference type="ChEBI" id="CHEBI:190135"/>
        <label>2</label>
    </ligand>
</feature>
<feature type="binding site" evidence="2">
    <location>
        <position position="121"/>
    </location>
    <ligand>
        <name>[2Fe-2S] cluster</name>
        <dbReference type="ChEBI" id="CHEBI:190135"/>
        <label>2</label>
    </ligand>
</feature>
<feature type="binding site" evidence="2">
    <location>
        <position position="153"/>
    </location>
    <ligand>
        <name>[2Fe-2S] cluster</name>
        <dbReference type="ChEBI" id="CHEBI:190135"/>
        <label>2</label>
    </ligand>
</feature>
<feature type="binding site" evidence="2">
    <location>
        <position position="155"/>
    </location>
    <ligand>
        <name>[2Fe-2S] cluster</name>
        <dbReference type="ChEBI" id="CHEBI:190135"/>
        <label>2</label>
    </ligand>
</feature>
<feature type="binding site" evidence="2">
    <location>
        <position position="155"/>
    </location>
    <ligand>
        <name>Mo-molybdopterin</name>
        <dbReference type="ChEBI" id="CHEBI:71302"/>
    </ligand>
</feature>
<feature type="binding site" evidence="2">
    <location>
        <begin position="266"/>
        <end position="273"/>
    </location>
    <ligand>
        <name>FAD</name>
        <dbReference type="ChEBI" id="CHEBI:57692"/>
    </ligand>
</feature>
<feature type="binding site" evidence="2">
    <location>
        <position position="347"/>
    </location>
    <ligand>
        <name>FAD</name>
        <dbReference type="ChEBI" id="CHEBI:57692"/>
    </ligand>
</feature>
<feature type="binding site" evidence="2">
    <location>
        <position position="356"/>
    </location>
    <ligand>
        <name>FAD</name>
        <dbReference type="ChEBI" id="CHEBI:57692"/>
    </ligand>
</feature>
<feature type="binding site" evidence="2">
    <location>
        <position position="360"/>
    </location>
    <ligand>
        <name>FAD</name>
        <dbReference type="ChEBI" id="CHEBI:57692"/>
    </ligand>
</feature>
<feature type="binding site" evidence="2">
    <location>
        <position position="369"/>
    </location>
    <ligand>
        <name>FAD</name>
        <dbReference type="ChEBI" id="CHEBI:57692"/>
    </ligand>
</feature>
<feature type="binding site" evidence="2">
    <location>
        <position position="413"/>
    </location>
    <ligand>
        <name>FAD</name>
        <dbReference type="ChEBI" id="CHEBI:57692"/>
    </ligand>
</feature>
<feature type="binding site" evidence="2">
    <location>
        <begin position="812"/>
        <end position="813"/>
    </location>
    <ligand>
        <name>Mo-molybdopterin</name>
        <dbReference type="ChEBI" id="CHEBI:71302"/>
    </ligand>
</feature>
<feature type="binding site" evidence="2">
    <location>
        <begin position="1094"/>
        <end position="1097"/>
    </location>
    <ligand>
        <name>Mo-molybdopterin</name>
        <dbReference type="ChEBI" id="CHEBI:71302"/>
    </ligand>
</feature>
<feature type="binding site" evidence="2">
    <location>
        <position position="1209"/>
    </location>
    <ligand>
        <name>Mo-molybdopterin</name>
        <dbReference type="ChEBI" id="CHEBI:71302"/>
    </ligand>
</feature>
<feature type="binding site" evidence="2">
    <location>
        <position position="1274"/>
    </location>
    <ligand>
        <name>Mo-molybdopterin</name>
        <dbReference type="ChEBI" id="CHEBI:71302"/>
    </ligand>
</feature>
<feature type="sequence conflict" description="In Ref. 3; AAI50827." evidence="7" ref="3">
    <original>K</original>
    <variation>E</variation>
    <location>
        <position position="202"/>
    </location>
</feature>
<sequence length="1345" mass="147913">MPCPAQISDDLEFFVNGRKVTEKNVDPEVTLLAFLRKNLCLTGTKDACGTGGCGACTVMVSQHDPVCKKTRHFSVMACLVPLCSLHGAAVTTVEGVGSIKTRLHPVQERIAKSHGTQCGFCTPGMVMSIYTLLRNHPQPSEEQLMEALGGNLCRCTGYRPILESGRTFCMEPDGCPQKGTGQCCLDQKESDSSGSKSDICTKLFVKDEFQPLDPTQELIFPPELLRMAENPEKQTLTFYGERITWIAPGTLQELLVLKAKYPEAPLISGNTALGPAMKSQGHFYPVLLSPARIPDLRMVTKTSGGLTIGACCSLAQVKDILAESISELPQEKTQTYRALLKHLRSLAGQQIRNMASLGGHVISRHCYSDLNPILSVGNTTLNLLSEEGPRQIPLSGHFLAGLASADLKPEEILGSVYIPHSQKREFVSAFRQAQCHQNALPDVNAGMRVLFREGTDVIEELSIAYGGVGPTTVSAQRSCQQLLGRRWNALMLDEACRLLLDEVSLPGSALGGKVEFRRTLIVSLFFKFYLEVLQELKADQKLPPESTDSQRYPEIADRFLSSLGDFQVTLPRGVQTYQRVDSHQPLQDPVGRPIMHLSGLKHATGEAVFCDDIPRVDKELFMALVTSTRAHARIISIDSSEVLDLPGVVDVITAEDIPGNNGEEDDKLLAVDKVLCVGQVICAVVAETDVQAKRATEKIKITYEDLKPVIFTIEDAIKHNSFLCPEKKLEQGNIEEAFENVDQVAEGTVHVGGQEHFYMETQRVLVIPKTEDKELDMYVSTQDPAHVQKTVSSTLNIPISRITCHVKRVGGGFGGKVGRPAVFGAIAAVGAVKTGHPIRLVLDREDDMLITGGRHPLFAKYKVGFMNSGRIKALDIECYINGGCTLDDSELVTEFLVLKLENAYKIRNLRLRGRACMTNLPSNTAFRGFGFPQGALVTESCITAVAAKCGLPPEKIREKNMYKTVDKTIYKQAFNPDPLIRCWNECLDKSSFHIRRTRVDEFNKKSYWKKRGIAIVPMKFSVGFAATSYHQAAALVHIYTDGSVLVAHGGNELGQGIHTKMLQVASRELKIPLSYLHICETSTTTVPNTIATAASVGADVNGRAVQNACQILLKRLEPVIKKNPEGTWRDWIEAAFEKRISLSATGYFRGYKAFMDWEKGEGDPFPYYVYGAACSEVEIDCLTGAHKKIRTDIVMDACCSLNPAIDIGQIEGAFIQGMGLYTTEELLYSPEGVLYSRSPDKYKIPTVTDVPEQFNVSLLPSSQTPLTLYSSKGLGESGMFLGSSVFFAIVDAVAAARRQRDIAEDFTVKSPATPEWVRMACADRFTDMIPRDDPKTFKPWSIPIA</sequence>
<proteinExistence type="evidence at protein level"/>
<accession>Q5SGK3</accession>
<accession>B9EKC6</accession>
<protein>
    <recommendedName>
        <fullName>Aldehyde oxidase 2</fullName>
        <ecNumber>1.2.3.1</ecNumber>
    </recommendedName>
    <alternativeName>
        <fullName>Aldehyde oxidase homolog 3</fullName>
    </alternativeName>
    <alternativeName>
        <fullName>Azaheterocycle hydroxylase 2</fullName>
        <ecNumber>1.17.3.-</ecNumber>
    </alternativeName>
</protein>
<organism>
    <name type="scientific">Mus musculus</name>
    <name type="common">Mouse</name>
    <dbReference type="NCBI Taxonomy" id="10090"/>
    <lineage>
        <taxon>Eukaryota</taxon>
        <taxon>Metazoa</taxon>
        <taxon>Chordata</taxon>
        <taxon>Craniata</taxon>
        <taxon>Vertebrata</taxon>
        <taxon>Euteleostomi</taxon>
        <taxon>Mammalia</taxon>
        <taxon>Eutheria</taxon>
        <taxon>Euarchontoglires</taxon>
        <taxon>Glires</taxon>
        <taxon>Rodentia</taxon>
        <taxon>Myomorpha</taxon>
        <taxon>Muroidea</taxon>
        <taxon>Muridae</taxon>
        <taxon>Murinae</taxon>
        <taxon>Mus</taxon>
        <taxon>Mus</taxon>
    </lineage>
</organism>
<comment type="function">
    <text evidence="5">Oxidase with broad substrate specificity, oxidizing aromatic azaheterocycles, such as phthalazine, as well as aldehydes, such as benzaldehyde and retinal. Cannot use hypoxanthine as substrate.</text>
</comment>
<comment type="catalytic activity">
    <reaction>
        <text>an aldehyde + O2 + H2O = a carboxylate + H2O2 + H(+)</text>
        <dbReference type="Rhea" id="RHEA:16829"/>
        <dbReference type="ChEBI" id="CHEBI:15377"/>
        <dbReference type="ChEBI" id="CHEBI:15378"/>
        <dbReference type="ChEBI" id="CHEBI:15379"/>
        <dbReference type="ChEBI" id="CHEBI:16240"/>
        <dbReference type="ChEBI" id="CHEBI:17478"/>
        <dbReference type="ChEBI" id="CHEBI:29067"/>
        <dbReference type="EC" id="1.2.3.1"/>
    </reaction>
</comment>
<comment type="cofactor">
    <cofactor evidence="1">
        <name>[2Fe-2S] cluster</name>
        <dbReference type="ChEBI" id="CHEBI:190135"/>
    </cofactor>
    <text evidence="1">Binds 2 [2Fe-2S] clusters per subunit.</text>
</comment>
<comment type="cofactor">
    <cofactor evidence="1">
        <name>FAD</name>
        <dbReference type="ChEBI" id="CHEBI:57692"/>
    </cofactor>
    <text evidence="1">Binds 1 FAD per subunit.</text>
</comment>
<comment type="cofactor">
    <cofactor evidence="1">
        <name>Mo-molybdopterin</name>
        <dbReference type="ChEBI" id="CHEBI:71302"/>
    </cofactor>
    <text evidence="1">Binds 1 Mo-molybdopterin (Mo-MPT) cofactor per subunit.</text>
</comment>
<comment type="subunit">
    <text evidence="1">Homodimer.</text>
</comment>
<comment type="subcellular location">
    <subcellularLocation>
        <location evidence="5">Cytoplasm</location>
    </subcellularLocation>
</comment>
<comment type="tissue specificity">
    <text evidence="5 6">Expressed in olfactory mucosa epithelium (at protein level). Detected in skin.</text>
</comment>
<comment type="miscellaneous">
    <text evidence="8">AOX genes evolved from a xanthine oxidoreductase ancestral precursor via a series of gene duplication and suppression/deletion events. Different animal species contain a different complement of AOX genes encoding an equivalent number of AOX isoenzymes. In mammals, the two extremes are represented by certain rodents such as mice and rats, which are endowed with 4 AOX genes, and by humans, whose genome is characterized by a single active gene (PubMed:23263164).</text>
</comment>
<comment type="similarity">
    <text evidence="7">Belongs to the xanthine dehydrogenase family.</text>
</comment>
<name>AOXB_MOUSE</name>
<reference key="1">
    <citation type="journal article" date="2004" name="J. Biol. Chem.">
        <title>The aldehyde oxidase gene cluster in mice and rats. Aldehyde oxidase homologue 3, a novel member of the molybdo-flavoenzyme family with selective expression in the olfactory mucosa.</title>
        <authorList>
            <person name="Kurosaki M."/>
            <person name="Terao M."/>
            <person name="Barzago M.M."/>
            <person name="Bastone A."/>
            <person name="Bernardinello D."/>
            <person name="Salmona M."/>
            <person name="Garattini E."/>
        </authorList>
    </citation>
    <scope>NUCLEOTIDE SEQUENCE [MRNA]</scope>
    <scope>IDENTIFICATION BY MASS SPECTROMETRY</scope>
    <scope>FUNCTION AS OXIDASE</scope>
    <scope>SUBSTRATE SPECIFICITY</scope>
    <scope>TISSUE SPECIFICITY</scope>
    <scope>SUBCELLULAR LOCATION</scope>
    <source>
        <strain>CD-1</strain>
        <tissue>Olfactory epithelium</tissue>
    </source>
</reference>
<reference key="2">
    <citation type="journal article" date="2009" name="PLoS Biol.">
        <title>Lineage-specific biology revealed by a finished genome assembly of the mouse.</title>
        <authorList>
            <person name="Church D.M."/>
            <person name="Goodstadt L."/>
            <person name="Hillier L.W."/>
            <person name="Zody M.C."/>
            <person name="Goldstein S."/>
            <person name="She X."/>
            <person name="Bult C.J."/>
            <person name="Agarwala R."/>
            <person name="Cherry J.L."/>
            <person name="DiCuccio M."/>
            <person name="Hlavina W."/>
            <person name="Kapustin Y."/>
            <person name="Meric P."/>
            <person name="Maglott D."/>
            <person name="Birtle Z."/>
            <person name="Marques A.C."/>
            <person name="Graves T."/>
            <person name="Zhou S."/>
            <person name="Teague B."/>
            <person name="Potamousis K."/>
            <person name="Churas C."/>
            <person name="Place M."/>
            <person name="Herschleb J."/>
            <person name="Runnheim R."/>
            <person name="Forrest D."/>
            <person name="Amos-Landgraf J."/>
            <person name="Schwartz D.C."/>
            <person name="Cheng Z."/>
            <person name="Lindblad-Toh K."/>
            <person name="Eichler E.E."/>
            <person name="Ponting C.P."/>
        </authorList>
    </citation>
    <scope>NUCLEOTIDE SEQUENCE [LARGE SCALE GENOMIC DNA]</scope>
    <source>
        <strain>C57BL/6J</strain>
    </source>
</reference>
<reference key="3">
    <citation type="journal article" date="2004" name="Genome Res.">
        <title>The status, quality, and expansion of the NIH full-length cDNA project: the Mammalian Gene Collection (MGC).</title>
        <authorList>
            <consortium name="The MGC Project Team"/>
        </authorList>
    </citation>
    <scope>NUCLEOTIDE SEQUENCE [LARGE SCALE MRNA]</scope>
</reference>
<reference key="4">
    <citation type="journal article" date="2013" name="Cell. Mol. Life Sci.">
        <title>Structure and evolution of vertebrate aldehyde oxidases: from gene duplication to gene suppression.</title>
        <authorList>
            <person name="Kurosaki M."/>
            <person name="Bolis M."/>
            <person name="Fratelli M."/>
            <person name="Barzago M.M."/>
            <person name="Pattini L."/>
            <person name="Perretta G."/>
            <person name="Terao M."/>
            <person name="Garattini E."/>
        </authorList>
    </citation>
    <scope>TISSUE SPECIFICITY</scope>
    <scope>IDENTIFICATION OF PARALOGS</scope>
</reference>
<keyword id="KW-0001">2Fe-2S</keyword>
<keyword id="KW-0963">Cytoplasm</keyword>
<keyword id="KW-0274">FAD</keyword>
<keyword id="KW-0285">Flavoprotein</keyword>
<keyword id="KW-0408">Iron</keyword>
<keyword id="KW-0411">Iron-sulfur</keyword>
<keyword id="KW-0479">Metal-binding</keyword>
<keyword id="KW-0500">Molybdenum</keyword>
<keyword id="KW-0560">Oxidoreductase</keyword>
<keyword id="KW-1185">Reference proteome</keyword>
<dbReference type="EC" id="1.2.3.1"/>
<dbReference type="EC" id="1.17.3.-"/>
<dbReference type="EMBL" id="AY187018">
    <property type="protein sequence ID" value="AAO38750.2"/>
    <property type="molecule type" value="mRNA"/>
</dbReference>
<dbReference type="EMBL" id="AY665589">
    <property type="protein sequence ID" value="AAV68256.1"/>
    <property type="molecule type" value="mRNA"/>
</dbReference>
<dbReference type="EMBL" id="AC121091">
    <property type="status" value="NOT_ANNOTATED_CDS"/>
    <property type="molecule type" value="Genomic_DNA"/>
</dbReference>
<dbReference type="EMBL" id="AC163498">
    <property type="status" value="NOT_ANNOTATED_CDS"/>
    <property type="molecule type" value="Genomic_DNA"/>
</dbReference>
<dbReference type="EMBL" id="BC150826">
    <property type="protein sequence ID" value="AAI50827.1"/>
    <property type="molecule type" value="mRNA"/>
</dbReference>
<dbReference type="CCDS" id="CCDS35576.1"/>
<dbReference type="RefSeq" id="NP_001008419.1">
    <property type="nucleotide sequence ID" value="NM_001008419.2"/>
</dbReference>
<dbReference type="SMR" id="Q5SGK3"/>
<dbReference type="BioGRID" id="229391">
    <property type="interactions" value="1"/>
</dbReference>
<dbReference type="FunCoup" id="Q5SGK3">
    <property type="interactions" value="434"/>
</dbReference>
<dbReference type="STRING" id="10090.ENSMUSP00000110006"/>
<dbReference type="GlyGen" id="Q5SGK3">
    <property type="glycosylation" value="1 site"/>
</dbReference>
<dbReference type="iPTMnet" id="Q5SGK3"/>
<dbReference type="PhosphoSitePlus" id="Q5SGK3"/>
<dbReference type="jPOST" id="Q5SGK3"/>
<dbReference type="PaxDb" id="10090-ENSMUSP00000110006"/>
<dbReference type="PeptideAtlas" id="Q5SGK3"/>
<dbReference type="ProteomicsDB" id="296261"/>
<dbReference type="Pumba" id="Q5SGK3"/>
<dbReference type="Ensembl" id="ENSMUST00000114366.3">
    <property type="protein sequence ID" value="ENSMUSP00000110006.2"/>
    <property type="gene ID" value="ENSMUSG00000079554.3"/>
</dbReference>
<dbReference type="GeneID" id="213043"/>
<dbReference type="KEGG" id="mmu:213043"/>
<dbReference type="UCSC" id="uc007bbp.1">
    <property type="organism name" value="mouse"/>
</dbReference>
<dbReference type="AGR" id="MGI:3529596"/>
<dbReference type="CTD" id="213043"/>
<dbReference type="MGI" id="MGI:3529596">
    <property type="gene designation" value="Aox2"/>
</dbReference>
<dbReference type="VEuPathDB" id="HostDB:ENSMUSG00000079554"/>
<dbReference type="eggNOG" id="KOG0430">
    <property type="taxonomic scope" value="Eukaryota"/>
</dbReference>
<dbReference type="GeneTree" id="ENSGT00950000183114"/>
<dbReference type="HOGENOM" id="CLU_001681_1_2_1"/>
<dbReference type="InParanoid" id="Q5SGK3"/>
<dbReference type="OMA" id="EGTWENW"/>
<dbReference type="OrthoDB" id="8300278at2759"/>
<dbReference type="PhylomeDB" id="Q5SGK3"/>
<dbReference type="TreeFam" id="TF353036"/>
<dbReference type="BRENDA" id="1.2.3.1">
    <property type="organism ID" value="3474"/>
</dbReference>
<dbReference type="BioGRID-ORCS" id="213043">
    <property type="hits" value="0 hits in 76 CRISPR screens"/>
</dbReference>
<dbReference type="ChiTaRS" id="Aox2">
    <property type="organism name" value="mouse"/>
</dbReference>
<dbReference type="PRO" id="PR:Q5SGK3"/>
<dbReference type="Proteomes" id="UP000000589">
    <property type="component" value="Chromosome 1"/>
</dbReference>
<dbReference type="RNAct" id="Q5SGK3">
    <property type="molecule type" value="protein"/>
</dbReference>
<dbReference type="Bgee" id="ENSMUSG00000079554">
    <property type="expression patterns" value="Expressed in spermatocyte and 20 other cell types or tissues"/>
</dbReference>
<dbReference type="GO" id="GO:0005829">
    <property type="term" value="C:cytosol"/>
    <property type="evidence" value="ECO:0000250"/>
    <property type="project" value="UniProtKB"/>
</dbReference>
<dbReference type="GO" id="GO:0051537">
    <property type="term" value="F:2 iron, 2 sulfur cluster binding"/>
    <property type="evidence" value="ECO:0000250"/>
    <property type="project" value="UniProtKB"/>
</dbReference>
<dbReference type="GO" id="GO:0004031">
    <property type="term" value="F:aldehyde oxidase activity"/>
    <property type="evidence" value="ECO:0000250"/>
    <property type="project" value="UniProtKB"/>
</dbReference>
<dbReference type="GO" id="GO:0071949">
    <property type="term" value="F:FAD binding"/>
    <property type="evidence" value="ECO:0007669"/>
    <property type="project" value="InterPro"/>
</dbReference>
<dbReference type="GO" id="GO:0050660">
    <property type="term" value="F:flavin adenine dinucleotide binding"/>
    <property type="evidence" value="ECO:0000250"/>
    <property type="project" value="UniProtKB"/>
</dbReference>
<dbReference type="GO" id="GO:0005506">
    <property type="term" value="F:iron ion binding"/>
    <property type="evidence" value="ECO:0000250"/>
    <property type="project" value="UniProtKB"/>
</dbReference>
<dbReference type="GO" id="GO:0043546">
    <property type="term" value="F:molybdopterin cofactor binding"/>
    <property type="evidence" value="ECO:0000250"/>
    <property type="project" value="UniProtKB"/>
</dbReference>
<dbReference type="GO" id="GO:0051287">
    <property type="term" value="F:NAD binding"/>
    <property type="evidence" value="ECO:0007669"/>
    <property type="project" value="InterPro"/>
</dbReference>
<dbReference type="GO" id="GO:0042803">
    <property type="term" value="F:protein homodimerization activity"/>
    <property type="evidence" value="ECO:0000250"/>
    <property type="project" value="UniProtKB"/>
</dbReference>
<dbReference type="GO" id="GO:0006805">
    <property type="term" value="P:xenobiotic metabolic process"/>
    <property type="evidence" value="ECO:0000250"/>
    <property type="project" value="UniProtKB"/>
</dbReference>
<dbReference type="CDD" id="cd00207">
    <property type="entry name" value="fer2"/>
    <property type="match status" value="1"/>
</dbReference>
<dbReference type="FunFam" id="1.10.150.120:FF:000001">
    <property type="entry name" value="Aldehyde oxidase 1"/>
    <property type="match status" value="1"/>
</dbReference>
<dbReference type="FunFam" id="3.10.20.30:FF:000015">
    <property type="entry name" value="Aldehyde oxidase 1"/>
    <property type="match status" value="1"/>
</dbReference>
<dbReference type="FunFam" id="3.30.365.10:FF:000003">
    <property type="entry name" value="Aldehyde oxidase 1"/>
    <property type="match status" value="1"/>
</dbReference>
<dbReference type="FunFam" id="3.90.1170.50:FF:000001">
    <property type="entry name" value="Aldehyde oxidase 1"/>
    <property type="match status" value="1"/>
</dbReference>
<dbReference type="FunFam" id="3.30.365.10:FF:000025">
    <property type="entry name" value="Aldehyde oxidase 4"/>
    <property type="match status" value="1"/>
</dbReference>
<dbReference type="FunFam" id="3.30.365.10:FF:000001">
    <property type="entry name" value="Xanthine dehydrogenase oxidase"/>
    <property type="match status" value="1"/>
</dbReference>
<dbReference type="FunFam" id="3.30.365.10:FF:000004">
    <property type="entry name" value="Xanthine dehydrogenase oxidase"/>
    <property type="match status" value="1"/>
</dbReference>
<dbReference type="FunFam" id="3.30.390.50:FF:000001">
    <property type="entry name" value="Xanthine dehydrogenase oxidase"/>
    <property type="match status" value="1"/>
</dbReference>
<dbReference type="FunFam" id="3.30.43.10:FF:000001">
    <property type="entry name" value="Xanthine dehydrogenase/oxidase"/>
    <property type="match status" value="1"/>
</dbReference>
<dbReference type="FunFam" id="3.30.465.10:FF:000004">
    <property type="entry name" value="Xanthine dehydrogenase/oxidase"/>
    <property type="match status" value="1"/>
</dbReference>
<dbReference type="Gene3D" id="3.10.20.30">
    <property type="match status" value="1"/>
</dbReference>
<dbReference type="Gene3D" id="3.30.465.10">
    <property type="match status" value="1"/>
</dbReference>
<dbReference type="Gene3D" id="1.10.150.120">
    <property type="entry name" value="[2Fe-2S]-binding domain"/>
    <property type="match status" value="1"/>
</dbReference>
<dbReference type="Gene3D" id="3.90.1170.50">
    <property type="entry name" value="Aldehyde oxidase/xanthine dehydrogenase, a/b hammerhead"/>
    <property type="match status" value="1"/>
</dbReference>
<dbReference type="Gene3D" id="3.30.365.10">
    <property type="entry name" value="Aldehyde oxidase/xanthine dehydrogenase, molybdopterin binding domain"/>
    <property type="match status" value="5"/>
</dbReference>
<dbReference type="Gene3D" id="3.30.390.50">
    <property type="entry name" value="CO dehydrogenase flavoprotein, C-terminal domain"/>
    <property type="match status" value="1"/>
</dbReference>
<dbReference type="Gene3D" id="3.30.43.10">
    <property type="entry name" value="Uridine Diphospho-n-acetylenolpyruvylglucosamine Reductase, domain 2"/>
    <property type="match status" value="1"/>
</dbReference>
<dbReference type="InterPro" id="IPR002888">
    <property type="entry name" value="2Fe-2S-bd"/>
</dbReference>
<dbReference type="InterPro" id="IPR036884">
    <property type="entry name" value="2Fe-2S-bd_dom_sf"/>
</dbReference>
<dbReference type="InterPro" id="IPR036010">
    <property type="entry name" value="2Fe-2S_ferredoxin-like_sf"/>
</dbReference>
<dbReference type="InterPro" id="IPR001041">
    <property type="entry name" value="2Fe-2S_ferredoxin-type"/>
</dbReference>
<dbReference type="InterPro" id="IPR006058">
    <property type="entry name" value="2Fe2S_fd_BS"/>
</dbReference>
<dbReference type="InterPro" id="IPR000674">
    <property type="entry name" value="Ald_Oxase/Xan_DH_a/b"/>
</dbReference>
<dbReference type="InterPro" id="IPR036856">
    <property type="entry name" value="Ald_Oxase/Xan_DH_a/b_sf"/>
</dbReference>
<dbReference type="InterPro" id="IPR016208">
    <property type="entry name" value="Ald_Oxase/xanthine_DH-like"/>
</dbReference>
<dbReference type="InterPro" id="IPR014313">
    <property type="entry name" value="Aldehyde_oxidase"/>
</dbReference>
<dbReference type="InterPro" id="IPR008274">
    <property type="entry name" value="AldOxase/xan_DH_MoCoBD1"/>
</dbReference>
<dbReference type="InterPro" id="IPR046867">
    <property type="entry name" value="AldOxase/xan_DH_MoCoBD2"/>
</dbReference>
<dbReference type="InterPro" id="IPR037165">
    <property type="entry name" value="AldOxase/xan_DH_Mopterin-bd_sf"/>
</dbReference>
<dbReference type="InterPro" id="IPR012675">
    <property type="entry name" value="Beta-grasp_dom_sf"/>
</dbReference>
<dbReference type="InterPro" id="IPR005107">
    <property type="entry name" value="CO_DH_flav_C"/>
</dbReference>
<dbReference type="InterPro" id="IPR036683">
    <property type="entry name" value="CO_DH_flav_C_dom_sf"/>
</dbReference>
<dbReference type="InterPro" id="IPR016166">
    <property type="entry name" value="FAD-bd_PCMH"/>
</dbReference>
<dbReference type="InterPro" id="IPR036318">
    <property type="entry name" value="FAD-bd_PCMH-like_sf"/>
</dbReference>
<dbReference type="InterPro" id="IPR016167">
    <property type="entry name" value="FAD-bd_PCMH_sub1"/>
</dbReference>
<dbReference type="InterPro" id="IPR016169">
    <property type="entry name" value="FAD-bd_PCMH_sub2"/>
</dbReference>
<dbReference type="InterPro" id="IPR002346">
    <property type="entry name" value="Mopterin_DH_FAD-bd"/>
</dbReference>
<dbReference type="NCBIfam" id="TIGR02969">
    <property type="entry name" value="mam_aldehyde_ox"/>
    <property type="match status" value="1"/>
</dbReference>
<dbReference type="PANTHER" id="PTHR45444">
    <property type="entry name" value="XANTHINE DEHYDROGENASE"/>
    <property type="match status" value="1"/>
</dbReference>
<dbReference type="PANTHER" id="PTHR45444:SF3">
    <property type="entry name" value="XANTHINE DEHYDROGENASE"/>
    <property type="match status" value="1"/>
</dbReference>
<dbReference type="Pfam" id="PF01315">
    <property type="entry name" value="Ald_Xan_dh_C"/>
    <property type="match status" value="1"/>
</dbReference>
<dbReference type="Pfam" id="PF03450">
    <property type="entry name" value="CO_deh_flav_C"/>
    <property type="match status" value="1"/>
</dbReference>
<dbReference type="Pfam" id="PF00941">
    <property type="entry name" value="FAD_binding_5"/>
    <property type="match status" value="1"/>
</dbReference>
<dbReference type="Pfam" id="PF00111">
    <property type="entry name" value="Fer2"/>
    <property type="match status" value="1"/>
</dbReference>
<dbReference type="Pfam" id="PF01799">
    <property type="entry name" value="Fer2_2"/>
    <property type="match status" value="1"/>
</dbReference>
<dbReference type="Pfam" id="PF02738">
    <property type="entry name" value="MoCoBD_1"/>
    <property type="match status" value="1"/>
</dbReference>
<dbReference type="Pfam" id="PF20256">
    <property type="entry name" value="MoCoBD_2"/>
    <property type="match status" value="1"/>
</dbReference>
<dbReference type="PIRSF" id="PIRSF000127">
    <property type="entry name" value="Xanthine_DH"/>
    <property type="match status" value="1"/>
</dbReference>
<dbReference type="SMART" id="SM01008">
    <property type="entry name" value="Ald_Xan_dh_C"/>
    <property type="match status" value="1"/>
</dbReference>
<dbReference type="SMART" id="SM01092">
    <property type="entry name" value="CO_deh_flav_C"/>
    <property type="match status" value="1"/>
</dbReference>
<dbReference type="SUPFAM" id="SSF54292">
    <property type="entry name" value="2Fe-2S ferredoxin-like"/>
    <property type="match status" value="1"/>
</dbReference>
<dbReference type="SUPFAM" id="SSF55447">
    <property type="entry name" value="CO dehydrogenase flavoprotein C-terminal domain-like"/>
    <property type="match status" value="1"/>
</dbReference>
<dbReference type="SUPFAM" id="SSF47741">
    <property type="entry name" value="CO dehydrogenase ISP C-domain like"/>
    <property type="match status" value="1"/>
</dbReference>
<dbReference type="SUPFAM" id="SSF54665">
    <property type="entry name" value="CO dehydrogenase molybdoprotein N-domain-like"/>
    <property type="match status" value="1"/>
</dbReference>
<dbReference type="SUPFAM" id="SSF56176">
    <property type="entry name" value="FAD-binding/transporter-associated domain-like"/>
    <property type="match status" value="1"/>
</dbReference>
<dbReference type="SUPFAM" id="SSF56003">
    <property type="entry name" value="Molybdenum cofactor-binding domain"/>
    <property type="match status" value="1"/>
</dbReference>
<dbReference type="PROSITE" id="PS00197">
    <property type="entry name" value="2FE2S_FER_1"/>
    <property type="match status" value="1"/>
</dbReference>
<dbReference type="PROSITE" id="PS51085">
    <property type="entry name" value="2FE2S_FER_2"/>
    <property type="match status" value="1"/>
</dbReference>
<dbReference type="PROSITE" id="PS51387">
    <property type="entry name" value="FAD_PCMH"/>
    <property type="match status" value="1"/>
</dbReference>